<reference key="1">
    <citation type="journal article" date="2004" name="Science">
        <title>The Ashbya gossypii genome as a tool for mapping the ancient Saccharomyces cerevisiae genome.</title>
        <authorList>
            <person name="Dietrich F.S."/>
            <person name="Voegeli S."/>
            <person name="Brachat S."/>
            <person name="Lerch A."/>
            <person name="Gates K."/>
            <person name="Steiner S."/>
            <person name="Mohr C."/>
            <person name="Poehlmann R."/>
            <person name="Luedi P."/>
            <person name="Choi S."/>
            <person name="Wing R.A."/>
            <person name="Flavier A."/>
            <person name="Gaffney T.D."/>
            <person name="Philippsen P."/>
        </authorList>
    </citation>
    <scope>NUCLEOTIDE SEQUENCE [LARGE SCALE GENOMIC DNA]</scope>
    <source>
        <strain>ATCC 10895 / CBS 109.51 / FGSC 9923 / NRRL Y-1056</strain>
    </source>
</reference>
<reference key="2">
    <citation type="journal article" date="2013" name="G3 (Bethesda)">
        <title>Genomes of Ashbya fungi isolated from insects reveal four mating-type loci, numerous translocations, lack of transposons, and distinct gene duplications.</title>
        <authorList>
            <person name="Dietrich F.S."/>
            <person name="Voegeli S."/>
            <person name="Kuo S."/>
            <person name="Philippsen P."/>
        </authorList>
    </citation>
    <scope>GENOME REANNOTATION</scope>
    <source>
        <strain>ATCC 10895 / CBS 109.51 / FGSC 9923 / NRRL Y-1056</strain>
    </source>
</reference>
<keyword id="KW-0072">Autophagy</keyword>
<keyword id="KW-0963">Cytoplasm</keyword>
<keyword id="KW-0378">Hydrolase</keyword>
<keyword id="KW-0539">Nucleus</keyword>
<keyword id="KW-0645">Protease</keyword>
<keyword id="KW-0653">Protein transport</keyword>
<keyword id="KW-1185">Reference proteome</keyword>
<keyword id="KW-0788">Thiol protease</keyword>
<keyword id="KW-0813">Transport</keyword>
<evidence type="ECO:0000250" key="1">
    <source>
        <dbReference type="UniProtKB" id="P53867"/>
    </source>
</evidence>
<evidence type="ECO:0000250" key="2">
    <source>
        <dbReference type="UniProtKB" id="Q9Y4P1"/>
    </source>
</evidence>
<evidence type="ECO:0000305" key="3"/>
<dbReference type="EC" id="3.4.22.-"/>
<dbReference type="EMBL" id="AE016815">
    <property type="protein sequence ID" value="AAS50580.1"/>
    <property type="molecule type" value="Genomic_DNA"/>
</dbReference>
<dbReference type="RefSeq" id="NP_982756.1">
    <property type="nucleotide sequence ID" value="NM_208109.1"/>
</dbReference>
<dbReference type="SMR" id="Q75E61"/>
<dbReference type="FunCoup" id="Q75E61">
    <property type="interactions" value="332"/>
</dbReference>
<dbReference type="STRING" id="284811.Q75E61"/>
<dbReference type="MEROPS" id="C54.001"/>
<dbReference type="EnsemblFungi" id="AAS50580">
    <property type="protein sequence ID" value="AAS50580"/>
    <property type="gene ID" value="AGOS_ABL191W"/>
</dbReference>
<dbReference type="GeneID" id="4618835"/>
<dbReference type="KEGG" id="ago:AGOS_ABL191W"/>
<dbReference type="eggNOG" id="KOG2674">
    <property type="taxonomic scope" value="Eukaryota"/>
</dbReference>
<dbReference type="HOGENOM" id="CLU_021259_5_3_1"/>
<dbReference type="InParanoid" id="Q75E61"/>
<dbReference type="OMA" id="CKINESE"/>
<dbReference type="OrthoDB" id="2960936at2759"/>
<dbReference type="Proteomes" id="UP000000591">
    <property type="component" value="Chromosome II"/>
</dbReference>
<dbReference type="GO" id="GO:0005737">
    <property type="term" value="C:cytoplasm"/>
    <property type="evidence" value="ECO:0000318"/>
    <property type="project" value="GO_Central"/>
</dbReference>
<dbReference type="GO" id="GO:0005829">
    <property type="term" value="C:cytosol"/>
    <property type="evidence" value="ECO:0007669"/>
    <property type="project" value="EnsemblFungi"/>
</dbReference>
<dbReference type="GO" id="GO:0005739">
    <property type="term" value="C:mitochondrion"/>
    <property type="evidence" value="ECO:0007669"/>
    <property type="project" value="EnsemblFungi"/>
</dbReference>
<dbReference type="GO" id="GO:0005634">
    <property type="term" value="C:nucleus"/>
    <property type="evidence" value="ECO:0007669"/>
    <property type="project" value="UniProtKB-SubCell"/>
</dbReference>
<dbReference type="GO" id="GO:0000407">
    <property type="term" value="C:phagophore assembly site"/>
    <property type="evidence" value="ECO:0007669"/>
    <property type="project" value="UniProtKB-SubCell"/>
</dbReference>
<dbReference type="GO" id="GO:0004197">
    <property type="term" value="F:cysteine-type endopeptidase activity"/>
    <property type="evidence" value="ECO:0000318"/>
    <property type="project" value="GO_Central"/>
</dbReference>
<dbReference type="GO" id="GO:0019786">
    <property type="term" value="F:protein-phosphatidylethanolamide deconjugating activity"/>
    <property type="evidence" value="ECO:0000318"/>
    <property type="project" value="GO_Central"/>
</dbReference>
<dbReference type="GO" id="GO:0035973">
    <property type="term" value="P:aggrephagy"/>
    <property type="evidence" value="ECO:0000318"/>
    <property type="project" value="GO_Central"/>
</dbReference>
<dbReference type="GO" id="GO:0000045">
    <property type="term" value="P:autophagosome assembly"/>
    <property type="evidence" value="ECO:0000318"/>
    <property type="project" value="GO_Central"/>
</dbReference>
<dbReference type="GO" id="GO:0032258">
    <property type="term" value="P:cytoplasm to vacuole targeting by the Cvt pathway"/>
    <property type="evidence" value="ECO:0007669"/>
    <property type="project" value="EnsemblFungi"/>
</dbReference>
<dbReference type="GO" id="GO:0000423">
    <property type="term" value="P:mitophagy"/>
    <property type="evidence" value="ECO:0000318"/>
    <property type="project" value="GO_Central"/>
</dbReference>
<dbReference type="GO" id="GO:0034727">
    <property type="term" value="P:piecemeal microautophagy of the nucleus"/>
    <property type="evidence" value="ECO:0000318"/>
    <property type="project" value="GO_Central"/>
</dbReference>
<dbReference type="GO" id="GO:0016485">
    <property type="term" value="P:protein processing"/>
    <property type="evidence" value="ECO:0000318"/>
    <property type="project" value="GO_Central"/>
</dbReference>
<dbReference type="GO" id="GO:0006612">
    <property type="term" value="P:protein targeting to membrane"/>
    <property type="evidence" value="ECO:0007669"/>
    <property type="project" value="EnsemblFungi"/>
</dbReference>
<dbReference type="InterPro" id="IPR038765">
    <property type="entry name" value="Papain-like_cys_pep_sf"/>
</dbReference>
<dbReference type="InterPro" id="IPR005078">
    <property type="entry name" value="Peptidase_C54"/>
</dbReference>
<dbReference type="InterPro" id="IPR046792">
    <property type="entry name" value="Peptidase_C54_cat"/>
</dbReference>
<dbReference type="PANTHER" id="PTHR22624:SF49">
    <property type="entry name" value="CYSTEINE PROTEASE"/>
    <property type="match status" value="1"/>
</dbReference>
<dbReference type="PANTHER" id="PTHR22624">
    <property type="entry name" value="CYSTEINE PROTEASE ATG4"/>
    <property type="match status" value="1"/>
</dbReference>
<dbReference type="Pfam" id="PF03416">
    <property type="entry name" value="Peptidase_C54"/>
    <property type="match status" value="1"/>
</dbReference>
<dbReference type="SUPFAM" id="SSF54001">
    <property type="entry name" value="Cysteine proteinases"/>
    <property type="match status" value="1"/>
</dbReference>
<proteinExistence type="inferred from homology"/>
<accession>Q75E61</accession>
<feature type="chain" id="PRO_0000215857" description="Probable cysteine protease ATG4">
    <location>
        <begin position="1"/>
        <end position="521"/>
    </location>
</feature>
<feature type="active site" description="Nucleophile" evidence="2">
    <location>
        <position position="177"/>
    </location>
</feature>
<feature type="active site" evidence="2">
    <location>
        <position position="352"/>
    </location>
</feature>
<feature type="active site" evidence="2">
    <location>
        <position position="354"/>
    </location>
</feature>
<sequence>MGFLIAYVFNLSPCSGDEMFETIGLAIIHFEGLNTNRVSKCNQNWHQESKQVAMELIQKVSQGLWELENCDTVNSVVVLGKEYPPVPEQRQEERHENGVNMFQHIFTRQGRWNEEFLADVHTRLHFTYRTRFVPIPRHPNGPSPMSISVMLRDNPLNVIENVLNNPDCFQTDIGWGCMIRTGQSLLANALQRACLGRDFRIDDNAANEHELRIIKWFEDDPKYPFSLHKFVQEGFSLSGKKPGEWFGPSATSRSIQALVAKFPACGIAHCVISTDSGDVYMDEVEPLFRADPSAAVLLLLCVRLGVDVVNEVYWEHIRHILSSEHSVGIAGGRPSSSLYFFGYQDEHLFYLDPHKPQLNLASYQQDLDLFRSVHTQRFNKVHMSDIDPSMLIGILLNGKDDWQLWQQHIASSQIIHLSDSKPVDLMLDHQLESAILGDRYLSEDGQGPSSKVDTGDYIDVGSFVPCTDSSCKINESEDEYQDVKCKNQRIVVVGETTTNGSPEVEVEKVLVEKETIPVRSK</sequence>
<comment type="function">
    <text evidence="1">Cysteine protease that plays a key role in cytoplasm to vacuole transport (Cvt) and autophagy by mediating both proteolytic activation and delipidation of ATG8. Required for selective autophagic degradation of the nucleus (nucleophagy) as well as for mitophagy which contributes to regulate mitochondrial quantity and quality by eliminating the mitochondria to a basal level to fulfill cellular energy requirements and preventing excess ROS production. The protease activity is required for proteolytic activation of ATG8: cleaves the C-terminal amino acid of ATG8 to reveal a C-terminal glycine. ATG8 ubiquitin-like activity requires the exposure of the glycine at the C-terminus for its conjugation to phosphatidylethanolamine (PE) and its insertion to membranes, which is necessary for autophagy. The ATG8-PE conjugate mediates tethering between adjacent membranes and stimulates membrane hemifusion, leading to expansion of the autophagosomal membrane during autophagy. In addition to the protease activity, also catalyzes deconjugation of PE-conjugated forms of ATG8 during macroautophagy: ATG8 delipidation is required to release the protein from membranes, which facilitates multiple events during macroautophagy, and especially for efficient autophagosome biogenesis, the assembly of ATG9-containing tubulovesicular clusters into phagophores/autophagosomes, and for the disassembly of PAS-associated ATG components. ATG8 delipidation by ATG4 also recycles ATG8-PE generated on inappropriate membranes to maintain a reservoir of unlipidated ATG8 that is required for autophagosome formation at the PAS.</text>
</comment>
<comment type="catalytic activity">
    <reaction evidence="1">
        <text>[protein]-C-terminal L-amino acid-glycyl-phosphatidylethanolamide + H2O = [protein]-C-terminal L-amino acid-glycine + a 1,2-diacyl-sn-glycero-3-phosphoethanolamine</text>
        <dbReference type="Rhea" id="RHEA:67548"/>
        <dbReference type="Rhea" id="RHEA-COMP:17323"/>
        <dbReference type="Rhea" id="RHEA-COMP:17324"/>
        <dbReference type="ChEBI" id="CHEBI:15377"/>
        <dbReference type="ChEBI" id="CHEBI:64612"/>
        <dbReference type="ChEBI" id="CHEBI:172940"/>
        <dbReference type="ChEBI" id="CHEBI:172941"/>
    </reaction>
    <physiologicalReaction direction="left-to-right" evidence="1">
        <dbReference type="Rhea" id="RHEA:67549"/>
    </physiologicalReaction>
</comment>
<comment type="subcellular location">
    <subcellularLocation>
        <location evidence="1">Cytoplasm</location>
    </subcellularLocation>
    <subcellularLocation>
        <location evidence="1">Nucleus</location>
    </subcellularLocation>
    <subcellularLocation>
        <location evidence="1">Preautophagosomal structure</location>
    </subcellularLocation>
</comment>
<comment type="similarity">
    <text evidence="3">Belongs to the peptidase C54 family.</text>
</comment>
<protein>
    <recommendedName>
        <fullName>Probable cysteine protease ATG4</fullName>
        <ecNumber>3.4.22.-</ecNumber>
    </recommendedName>
    <alternativeName>
        <fullName>Autophagy-related protein 4</fullName>
    </alternativeName>
</protein>
<organism>
    <name type="scientific">Eremothecium gossypii (strain ATCC 10895 / CBS 109.51 / FGSC 9923 / NRRL Y-1056)</name>
    <name type="common">Yeast</name>
    <name type="synonym">Ashbya gossypii</name>
    <dbReference type="NCBI Taxonomy" id="284811"/>
    <lineage>
        <taxon>Eukaryota</taxon>
        <taxon>Fungi</taxon>
        <taxon>Dikarya</taxon>
        <taxon>Ascomycota</taxon>
        <taxon>Saccharomycotina</taxon>
        <taxon>Saccharomycetes</taxon>
        <taxon>Saccharomycetales</taxon>
        <taxon>Saccharomycetaceae</taxon>
        <taxon>Eremothecium</taxon>
    </lineage>
</organism>
<name>ATG4_EREGS</name>
<gene>
    <name type="primary">ATG4</name>
    <name type="ordered locus">ABL191W</name>
</gene>